<proteinExistence type="inferred from homology"/>
<evidence type="ECO:0000255" key="1">
    <source>
        <dbReference type="HAMAP-Rule" id="MF_00042"/>
    </source>
</evidence>
<evidence type="ECO:0000255" key="2">
    <source>
        <dbReference type="PROSITE-ProRule" id="PRU00408"/>
    </source>
</evidence>
<dbReference type="EC" id="3.1.26.4" evidence="1"/>
<dbReference type="EMBL" id="AM236080">
    <property type="protein sequence ID" value="CAK06529.1"/>
    <property type="molecule type" value="Genomic_DNA"/>
</dbReference>
<dbReference type="RefSeq" id="WP_011650766.1">
    <property type="nucleotide sequence ID" value="NC_008380.1"/>
</dbReference>
<dbReference type="SMR" id="Q1MKH6"/>
<dbReference type="EnsemblBacteria" id="CAK06529">
    <property type="protein sequence ID" value="CAK06529"/>
    <property type="gene ID" value="RL1032"/>
</dbReference>
<dbReference type="KEGG" id="rle:RL1032"/>
<dbReference type="eggNOG" id="COG0328">
    <property type="taxonomic scope" value="Bacteria"/>
</dbReference>
<dbReference type="HOGENOM" id="CLU_030894_6_0_5"/>
<dbReference type="Proteomes" id="UP000006575">
    <property type="component" value="Chromosome"/>
</dbReference>
<dbReference type="GO" id="GO:0005737">
    <property type="term" value="C:cytoplasm"/>
    <property type="evidence" value="ECO:0007669"/>
    <property type="project" value="UniProtKB-SubCell"/>
</dbReference>
<dbReference type="GO" id="GO:0000287">
    <property type="term" value="F:magnesium ion binding"/>
    <property type="evidence" value="ECO:0007669"/>
    <property type="project" value="UniProtKB-UniRule"/>
</dbReference>
<dbReference type="GO" id="GO:0003676">
    <property type="term" value="F:nucleic acid binding"/>
    <property type="evidence" value="ECO:0007669"/>
    <property type="project" value="InterPro"/>
</dbReference>
<dbReference type="GO" id="GO:0004523">
    <property type="term" value="F:RNA-DNA hybrid ribonuclease activity"/>
    <property type="evidence" value="ECO:0007669"/>
    <property type="project" value="UniProtKB-UniRule"/>
</dbReference>
<dbReference type="GO" id="GO:0043137">
    <property type="term" value="P:DNA replication, removal of RNA primer"/>
    <property type="evidence" value="ECO:0007669"/>
    <property type="project" value="TreeGrafter"/>
</dbReference>
<dbReference type="CDD" id="cd09278">
    <property type="entry name" value="RNase_HI_prokaryote_like"/>
    <property type="match status" value="1"/>
</dbReference>
<dbReference type="FunFam" id="3.30.420.10:FF:000089">
    <property type="entry name" value="Ribonuclease H"/>
    <property type="match status" value="1"/>
</dbReference>
<dbReference type="Gene3D" id="3.30.420.10">
    <property type="entry name" value="Ribonuclease H-like superfamily/Ribonuclease H"/>
    <property type="match status" value="1"/>
</dbReference>
<dbReference type="HAMAP" id="MF_00042">
    <property type="entry name" value="RNase_H"/>
    <property type="match status" value="1"/>
</dbReference>
<dbReference type="InterPro" id="IPR050092">
    <property type="entry name" value="RNase_H"/>
</dbReference>
<dbReference type="InterPro" id="IPR012337">
    <property type="entry name" value="RNaseH-like_sf"/>
</dbReference>
<dbReference type="InterPro" id="IPR002156">
    <property type="entry name" value="RNaseH_domain"/>
</dbReference>
<dbReference type="InterPro" id="IPR036397">
    <property type="entry name" value="RNaseH_sf"/>
</dbReference>
<dbReference type="InterPro" id="IPR022892">
    <property type="entry name" value="RNaseHI"/>
</dbReference>
<dbReference type="NCBIfam" id="NF001236">
    <property type="entry name" value="PRK00203.1"/>
    <property type="match status" value="1"/>
</dbReference>
<dbReference type="PANTHER" id="PTHR10642">
    <property type="entry name" value="RIBONUCLEASE H1"/>
    <property type="match status" value="1"/>
</dbReference>
<dbReference type="PANTHER" id="PTHR10642:SF26">
    <property type="entry name" value="RIBONUCLEASE H1"/>
    <property type="match status" value="1"/>
</dbReference>
<dbReference type="Pfam" id="PF00075">
    <property type="entry name" value="RNase_H"/>
    <property type="match status" value="1"/>
</dbReference>
<dbReference type="SUPFAM" id="SSF53098">
    <property type="entry name" value="Ribonuclease H-like"/>
    <property type="match status" value="1"/>
</dbReference>
<dbReference type="PROSITE" id="PS50879">
    <property type="entry name" value="RNASE_H_1"/>
    <property type="match status" value="1"/>
</dbReference>
<organism>
    <name type="scientific">Rhizobium johnstonii (strain DSM 114642 / LMG 32736 / 3841)</name>
    <name type="common">Rhizobium leguminosarum bv. viciae</name>
    <dbReference type="NCBI Taxonomy" id="216596"/>
    <lineage>
        <taxon>Bacteria</taxon>
        <taxon>Pseudomonadati</taxon>
        <taxon>Pseudomonadota</taxon>
        <taxon>Alphaproteobacteria</taxon>
        <taxon>Hyphomicrobiales</taxon>
        <taxon>Rhizobiaceae</taxon>
        <taxon>Rhizobium/Agrobacterium group</taxon>
        <taxon>Rhizobium</taxon>
        <taxon>Rhizobium johnstonii</taxon>
    </lineage>
</organism>
<protein>
    <recommendedName>
        <fullName evidence="1">Ribonuclease H</fullName>
        <shortName evidence="1">RNase H</shortName>
        <ecNumber evidence="1">3.1.26.4</ecNumber>
    </recommendedName>
</protein>
<feature type="chain" id="PRO_0000332662" description="Ribonuclease H">
    <location>
        <begin position="1"/>
        <end position="151"/>
    </location>
</feature>
<feature type="domain" description="RNase H type-1" evidence="2">
    <location>
        <begin position="1"/>
        <end position="141"/>
    </location>
</feature>
<feature type="binding site" evidence="1">
    <location>
        <position position="9"/>
    </location>
    <ligand>
        <name>Mg(2+)</name>
        <dbReference type="ChEBI" id="CHEBI:18420"/>
        <label>1</label>
    </ligand>
</feature>
<feature type="binding site" evidence="1">
    <location>
        <position position="9"/>
    </location>
    <ligand>
        <name>Mg(2+)</name>
        <dbReference type="ChEBI" id="CHEBI:18420"/>
        <label>2</label>
    </ligand>
</feature>
<feature type="binding site" evidence="1">
    <location>
        <position position="47"/>
    </location>
    <ligand>
        <name>Mg(2+)</name>
        <dbReference type="ChEBI" id="CHEBI:18420"/>
        <label>1</label>
    </ligand>
</feature>
<feature type="binding site" evidence="1">
    <location>
        <position position="69"/>
    </location>
    <ligand>
        <name>Mg(2+)</name>
        <dbReference type="ChEBI" id="CHEBI:18420"/>
        <label>1</label>
    </ligand>
</feature>
<feature type="binding site" evidence="1">
    <location>
        <position position="133"/>
    </location>
    <ligand>
        <name>Mg(2+)</name>
        <dbReference type="ChEBI" id="CHEBI:18420"/>
        <label>2</label>
    </ligand>
</feature>
<comment type="function">
    <text evidence="1">Endonuclease that specifically degrades the RNA of RNA-DNA hybrids.</text>
</comment>
<comment type="catalytic activity">
    <reaction evidence="1">
        <text>Endonucleolytic cleavage to 5'-phosphomonoester.</text>
        <dbReference type="EC" id="3.1.26.4"/>
    </reaction>
</comment>
<comment type="cofactor">
    <cofactor evidence="1">
        <name>Mg(2+)</name>
        <dbReference type="ChEBI" id="CHEBI:18420"/>
    </cofactor>
    <text evidence="1">Binds 1 Mg(2+) ion per subunit. May bind a second metal ion at a regulatory site, or after substrate binding.</text>
</comment>
<comment type="subunit">
    <text evidence="1">Monomer.</text>
</comment>
<comment type="subcellular location">
    <subcellularLocation>
        <location evidence="1">Cytoplasm</location>
    </subcellularLocation>
</comment>
<comment type="similarity">
    <text evidence="1">Belongs to the RNase H family.</text>
</comment>
<sequence>MKHVDIFTDGACSGNPGPGGWGAVLRYGDVEKELCGGEADTTNNRMELLAAISALSALKSPCEVDLYTDSAYVKDGISKWIFGWKKNGWKTADKKPVKNAELWQALEAARDRHKVTLHWVKGHAGHPENERADELARKGMEPFKKGKAVSF</sequence>
<name>RNH_RHIJ3</name>
<keyword id="KW-0963">Cytoplasm</keyword>
<keyword id="KW-0255">Endonuclease</keyword>
<keyword id="KW-0378">Hydrolase</keyword>
<keyword id="KW-0460">Magnesium</keyword>
<keyword id="KW-0479">Metal-binding</keyword>
<keyword id="KW-0540">Nuclease</keyword>
<accession>Q1MKH6</accession>
<gene>
    <name evidence="1" type="primary">rnhA</name>
    <name type="ordered locus">RL1032</name>
</gene>
<reference key="1">
    <citation type="journal article" date="2006" name="Genome Biol.">
        <title>The genome of Rhizobium leguminosarum has recognizable core and accessory components.</title>
        <authorList>
            <person name="Young J.P.W."/>
            <person name="Crossman L.C."/>
            <person name="Johnston A.W.B."/>
            <person name="Thomson N.R."/>
            <person name="Ghazoui Z.F."/>
            <person name="Hull K.H."/>
            <person name="Wexler M."/>
            <person name="Curson A.R.J."/>
            <person name="Todd J.D."/>
            <person name="Poole P.S."/>
            <person name="Mauchline T.H."/>
            <person name="East A.K."/>
            <person name="Quail M.A."/>
            <person name="Churcher C."/>
            <person name="Arrowsmith C."/>
            <person name="Cherevach I."/>
            <person name="Chillingworth T."/>
            <person name="Clarke K."/>
            <person name="Cronin A."/>
            <person name="Davis P."/>
            <person name="Fraser A."/>
            <person name="Hance Z."/>
            <person name="Hauser H."/>
            <person name="Jagels K."/>
            <person name="Moule S."/>
            <person name="Mungall K."/>
            <person name="Norbertczak H."/>
            <person name="Rabbinowitsch E."/>
            <person name="Sanders M."/>
            <person name="Simmonds M."/>
            <person name="Whitehead S."/>
            <person name="Parkhill J."/>
        </authorList>
    </citation>
    <scope>NUCLEOTIDE SEQUENCE [LARGE SCALE GENOMIC DNA]</scope>
    <source>
        <strain>DSM 114642 / LMG 32736 / 3841</strain>
    </source>
</reference>